<dbReference type="EC" id="3.5.99.6" evidence="1"/>
<dbReference type="EMBL" id="BA000032">
    <property type="protein sequence ID" value="BAC61381.1"/>
    <property type="molecule type" value="Genomic_DNA"/>
</dbReference>
<dbReference type="RefSeq" id="NP_799548.1">
    <property type="nucleotide sequence ID" value="NC_004605.1"/>
</dbReference>
<dbReference type="RefSeq" id="WP_005464933.1">
    <property type="nucleotide sequence ID" value="NC_004605.1"/>
</dbReference>
<dbReference type="SMR" id="Q87K60"/>
<dbReference type="GeneID" id="1190717"/>
<dbReference type="KEGG" id="vpa:VPA0038"/>
<dbReference type="PATRIC" id="fig|223926.6.peg.2998"/>
<dbReference type="eggNOG" id="COG0363">
    <property type="taxonomic scope" value="Bacteria"/>
</dbReference>
<dbReference type="HOGENOM" id="CLU_049611_0_1_6"/>
<dbReference type="UniPathway" id="UPA00629">
    <property type="reaction ID" value="UER00684"/>
</dbReference>
<dbReference type="Proteomes" id="UP000002493">
    <property type="component" value="Chromosome 2"/>
</dbReference>
<dbReference type="GO" id="GO:0005737">
    <property type="term" value="C:cytoplasm"/>
    <property type="evidence" value="ECO:0007669"/>
    <property type="project" value="TreeGrafter"/>
</dbReference>
<dbReference type="GO" id="GO:0004342">
    <property type="term" value="F:glucosamine-6-phosphate deaminase activity"/>
    <property type="evidence" value="ECO:0007669"/>
    <property type="project" value="UniProtKB-UniRule"/>
</dbReference>
<dbReference type="GO" id="GO:0042802">
    <property type="term" value="F:identical protein binding"/>
    <property type="evidence" value="ECO:0007669"/>
    <property type="project" value="TreeGrafter"/>
</dbReference>
<dbReference type="GO" id="GO:0005975">
    <property type="term" value="P:carbohydrate metabolic process"/>
    <property type="evidence" value="ECO:0007669"/>
    <property type="project" value="InterPro"/>
</dbReference>
<dbReference type="GO" id="GO:0006043">
    <property type="term" value="P:glucosamine catabolic process"/>
    <property type="evidence" value="ECO:0007669"/>
    <property type="project" value="TreeGrafter"/>
</dbReference>
<dbReference type="GO" id="GO:0006046">
    <property type="term" value="P:N-acetylglucosamine catabolic process"/>
    <property type="evidence" value="ECO:0007669"/>
    <property type="project" value="TreeGrafter"/>
</dbReference>
<dbReference type="GO" id="GO:0019262">
    <property type="term" value="P:N-acetylneuraminate catabolic process"/>
    <property type="evidence" value="ECO:0007669"/>
    <property type="project" value="UniProtKB-UniRule"/>
</dbReference>
<dbReference type="CDD" id="cd01399">
    <property type="entry name" value="GlcN6P_deaminase"/>
    <property type="match status" value="1"/>
</dbReference>
<dbReference type="FunFam" id="3.40.50.1360:FF:000002">
    <property type="entry name" value="Glucosamine-6-phosphate deaminase"/>
    <property type="match status" value="1"/>
</dbReference>
<dbReference type="Gene3D" id="3.40.50.1360">
    <property type="match status" value="1"/>
</dbReference>
<dbReference type="HAMAP" id="MF_01241">
    <property type="entry name" value="GlcN6P_deamin"/>
    <property type="match status" value="1"/>
</dbReference>
<dbReference type="InterPro" id="IPR006148">
    <property type="entry name" value="Glc/Gal-6P_isomerase"/>
</dbReference>
<dbReference type="InterPro" id="IPR004547">
    <property type="entry name" value="Glucosamine6P_isomerase"/>
</dbReference>
<dbReference type="InterPro" id="IPR018321">
    <property type="entry name" value="Glucosamine6P_isomerase_CS"/>
</dbReference>
<dbReference type="InterPro" id="IPR037171">
    <property type="entry name" value="NagB/RpiA_transferase-like"/>
</dbReference>
<dbReference type="NCBIfam" id="TIGR00502">
    <property type="entry name" value="nagB"/>
    <property type="match status" value="1"/>
</dbReference>
<dbReference type="NCBIfam" id="NF001685">
    <property type="entry name" value="PRK00443.1-5"/>
    <property type="match status" value="1"/>
</dbReference>
<dbReference type="PANTHER" id="PTHR11280">
    <property type="entry name" value="GLUCOSAMINE-6-PHOSPHATE ISOMERASE"/>
    <property type="match status" value="1"/>
</dbReference>
<dbReference type="PANTHER" id="PTHR11280:SF5">
    <property type="entry name" value="GLUCOSAMINE-6-PHOSPHATE ISOMERASE"/>
    <property type="match status" value="1"/>
</dbReference>
<dbReference type="Pfam" id="PF01182">
    <property type="entry name" value="Glucosamine_iso"/>
    <property type="match status" value="1"/>
</dbReference>
<dbReference type="SUPFAM" id="SSF100950">
    <property type="entry name" value="NagB/RpiA/CoA transferase-like"/>
    <property type="match status" value="1"/>
</dbReference>
<dbReference type="PROSITE" id="PS01161">
    <property type="entry name" value="GLC_GALNAC_ISOMERASE"/>
    <property type="match status" value="1"/>
</dbReference>
<accession>Q87K60</accession>
<proteinExistence type="inferred from homology"/>
<sequence>MRLIPLTRAAQVGKWAAAHIAKRINDFKPTAERPFVLGLPTGGTPLATYKALIELYQAGEVSFKHVVTFNMDEYIGIPADHPESYRSFMYNNFFNHIDIQEENINLLNGNTDNHEAECKRYEDKIKSYGKINLFMGGVGNDGHIAFNEPASSLSSRTRIKTLTEDTRIANSRFFDGDINQVPKYALTIGVGTLLDAEEVMILVTGHNKALALEAAVEGCVNHLWTVSALQLHPKAVIVCDEPSQQELKVKTVKYFSELEAENIKGF</sequence>
<feature type="chain" id="PRO_0000160185" description="Glucosamine-6-phosphate deaminase">
    <location>
        <begin position="1"/>
        <end position="266"/>
    </location>
</feature>
<feature type="active site" description="Proton acceptor; for enolization step" evidence="1">
    <location>
        <position position="72"/>
    </location>
</feature>
<feature type="active site" description="For ring-opening step" evidence="1">
    <location>
        <position position="141"/>
    </location>
</feature>
<feature type="active site" description="Proton acceptor; for ring-opening step" evidence="1">
    <location>
        <position position="143"/>
    </location>
</feature>
<feature type="active site" description="For ring-opening step" evidence="1">
    <location>
        <position position="148"/>
    </location>
</feature>
<feature type="site" description="Part of the allosteric site" evidence="1">
    <location>
        <position position="151"/>
    </location>
</feature>
<feature type="site" description="Part of the allosteric site" evidence="1">
    <location>
        <position position="158"/>
    </location>
</feature>
<feature type="site" description="Part of the allosteric site" evidence="1">
    <location>
        <position position="160"/>
    </location>
</feature>
<feature type="site" description="Part of the allosteric site" evidence="1">
    <location>
        <position position="161"/>
    </location>
</feature>
<feature type="site" description="Part of the allosteric site" evidence="1">
    <location>
        <position position="254"/>
    </location>
</feature>
<feature type="disulfide bond" description="Interchain" evidence="1">
    <location>
        <position position="219"/>
    </location>
</feature>
<gene>
    <name evidence="1" type="primary">nagB</name>
    <name type="ordered locus">VPA0038</name>
</gene>
<comment type="function">
    <text evidence="1">Catalyzes the reversible isomerization-deamination of glucosamine 6-phosphate (GlcN6P) to form fructose 6-phosphate (Fru6P) and ammonium ion.</text>
</comment>
<comment type="catalytic activity">
    <reaction evidence="1">
        <text>alpha-D-glucosamine 6-phosphate + H2O = beta-D-fructose 6-phosphate + NH4(+)</text>
        <dbReference type="Rhea" id="RHEA:12172"/>
        <dbReference type="ChEBI" id="CHEBI:15377"/>
        <dbReference type="ChEBI" id="CHEBI:28938"/>
        <dbReference type="ChEBI" id="CHEBI:57634"/>
        <dbReference type="ChEBI" id="CHEBI:75989"/>
        <dbReference type="EC" id="3.5.99.6"/>
    </reaction>
</comment>
<comment type="activity regulation">
    <text evidence="1">Allosterically activated by N-acetylglucosamine 6-phosphate (GlcNAc6P).</text>
</comment>
<comment type="pathway">
    <text evidence="1">Amino-sugar metabolism; N-acetylneuraminate degradation; D-fructose 6-phosphate from N-acetylneuraminate: step 5/5.</text>
</comment>
<comment type="subunit">
    <text evidence="1">Homohexamer; trimer of disulfide-linked dimers.</text>
</comment>
<comment type="similarity">
    <text evidence="1">Belongs to the glucosamine/galactosamine-6-phosphate isomerase family. NagB subfamily.</text>
</comment>
<evidence type="ECO:0000255" key="1">
    <source>
        <dbReference type="HAMAP-Rule" id="MF_01241"/>
    </source>
</evidence>
<name>NAGB_VIBPA</name>
<keyword id="KW-0021">Allosteric enzyme</keyword>
<keyword id="KW-0119">Carbohydrate metabolism</keyword>
<keyword id="KW-1015">Disulfide bond</keyword>
<keyword id="KW-0378">Hydrolase</keyword>
<reference key="1">
    <citation type="journal article" date="2003" name="Lancet">
        <title>Genome sequence of Vibrio parahaemolyticus: a pathogenic mechanism distinct from that of V. cholerae.</title>
        <authorList>
            <person name="Makino K."/>
            <person name="Oshima K."/>
            <person name="Kurokawa K."/>
            <person name="Yokoyama K."/>
            <person name="Uda T."/>
            <person name="Tagomori K."/>
            <person name="Iijima Y."/>
            <person name="Najima M."/>
            <person name="Nakano M."/>
            <person name="Yamashita A."/>
            <person name="Kubota Y."/>
            <person name="Kimura S."/>
            <person name="Yasunaga T."/>
            <person name="Honda T."/>
            <person name="Shinagawa H."/>
            <person name="Hattori M."/>
            <person name="Iida T."/>
        </authorList>
    </citation>
    <scope>NUCLEOTIDE SEQUENCE [LARGE SCALE GENOMIC DNA]</scope>
    <source>
        <strain>RIMD 2210633</strain>
    </source>
</reference>
<protein>
    <recommendedName>
        <fullName evidence="1">Glucosamine-6-phosphate deaminase</fullName>
        <ecNumber evidence="1">3.5.99.6</ecNumber>
    </recommendedName>
    <alternativeName>
        <fullName evidence="1">GlcN6P deaminase</fullName>
        <shortName evidence="1">GNPDA</shortName>
    </alternativeName>
    <alternativeName>
        <fullName evidence="1">Glucosamine-6-phosphate isomerase</fullName>
    </alternativeName>
</protein>
<organism>
    <name type="scientific">Vibrio parahaemolyticus serotype O3:K6 (strain RIMD 2210633)</name>
    <dbReference type="NCBI Taxonomy" id="223926"/>
    <lineage>
        <taxon>Bacteria</taxon>
        <taxon>Pseudomonadati</taxon>
        <taxon>Pseudomonadota</taxon>
        <taxon>Gammaproteobacteria</taxon>
        <taxon>Vibrionales</taxon>
        <taxon>Vibrionaceae</taxon>
        <taxon>Vibrio</taxon>
    </lineage>
</organism>